<accession>P30301</accession>
<accession>Q17R41</accession>
<proteinExistence type="evidence at protein level"/>
<protein>
    <recommendedName>
        <fullName evidence="18">Lens fiber major intrinsic protein</fullName>
    </recommendedName>
    <alternativeName>
        <fullName evidence="19">Aquaporin-0</fullName>
    </alternativeName>
    <alternativeName>
        <fullName evidence="18">MIP26</fullName>
        <shortName evidence="18">MP26</shortName>
    </alternativeName>
</protein>
<name>MIP_HUMAN</name>
<dbReference type="EMBL" id="U36308">
    <property type="protein sequence ID" value="AAC02794.2"/>
    <property type="molecule type" value="Genomic_DNA"/>
</dbReference>
<dbReference type="EMBL" id="AC024884">
    <property type="status" value="NOT_ANNOTATED_CDS"/>
    <property type="molecule type" value="Genomic_DNA"/>
</dbReference>
<dbReference type="EMBL" id="BC074913">
    <property type="protein sequence ID" value="AAH74913.1"/>
    <property type="molecule type" value="mRNA"/>
</dbReference>
<dbReference type="EMBL" id="BC117474">
    <property type="protein sequence ID" value="AAI17475.1"/>
    <property type="molecule type" value="mRNA"/>
</dbReference>
<dbReference type="CCDS" id="CCDS8919.1"/>
<dbReference type="PIR" id="A55279">
    <property type="entry name" value="A55279"/>
</dbReference>
<dbReference type="RefSeq" id="NP_036196.1">
    <property type="nucleotide sequence ID" value="NM_012064.4"/>
</dbReference>
<dbReference type="SMR" id="P30301"/>
<dbReference type="BioGRID" id="110430">
    <property type="interactions" value="51"/>
</dbReference>
<dbReference type="FunCoup" id="P30301">
    <property type="interactions" value="284"/>
</dbReference>
<dbReference type="IntAct" id="P30301">
    <property type="interactions" value="49"/>
</dbReference>
<dbReference type="MINT" id="P30301"/>
<dbReference type="STRING" id="9606.ENSP00000498622"/>
<dbReference type="DrugBank" id="DB02451">
    <property type="generic name" value="B-nonylglucoside"/>
</dbReference>
<dbReference type="iPTMnet" id="P30301"/>
<dbReference type="PhosphoSitePlus" id="P30301"/>
<dbReference type="BioMuta" id="MIP"/>
<dbReference type="DMDM" id="266537"/>
<dbReference type="OGP" id="P30301"/>
<dbReference type="PaxDb" id="9606-ENSP00000257979"/>
<dbReference type="PeptideAtlas" id="P30301"/>
<dbReference type="Antibodypedia" id="28228">
    <property type="antibodies" value="233 antibodies from 27 providers"/>
</dbReference>
<dbReference type="DNASU" id="4284"/>
<dbReference type="Ensembl" id="ENST00000652304.1">
    <property type="protein sequence ID" value="ENSP00000498622.1"/>
    <property type="gene ID" value="ENSG00000135517.9"/>
</dbReference>
<dbReference type="GeneID" id="4284"/>
<dbReference type="KEGG" id="hsa:4284"/>
<dbReference type="MANE-Select" id="ENST00000652304.1">
    <property type="protein sequence ID" value="ENSP00000498622.1"/>
    <property type="RefSeq nucleotide sequence ID" value="NM_012064.4"/>
    <property type="RefSeq protein sequence ID" value="NP_036196.1"/>
</dbReference>
<dbReference type="UCSC" id="uc001slh.4">
    <property type="organism name" value="human"/>
</dbReference>
<dbReference type="AGR" id="HGNC:7103"/>
<dbReference type="CTD" id="4284"/>
<dbReference type="DisGeNET" id="4284"/>
<dbReference type="GeneCards" id="MIP"/>
<dbReference type="HGNC" id="HGNC:7103">
    <property type="gene designation" value="MIP"/>
</dbReference>
<dbReference type="HPA" id="ENSG00000135517">
    <property type="expression patterns" value="Not detected"/>
</dbReference>
<dbReference type="MalaCards" id="MIP"/>
<dbReference type="MIM" id="154050">
    <property type="type" value="gene"/>
</dbReference>
<dbReference type="MIM" id="615274">
    <property type="type" value="phenotype"/>
</dbReference>
<dbReference type="neXtProt" id="NX_P30301"/>
<dbReference type="OpenTargets" id="ENSG00000135517"/>
<dbReference type="Orphanet" id="98989">
    <property type="disease" value="Cerulean cataract"/>
</dbReference>
<dbReference type="Orphanet" id="441452">
    <property type="disease" value="Early-onset lamellar cataract"/>
</dbReference>
<dbReference type="Orphanet" id="98991">
    <property type="disease" value="Early-onset nuclear cataract"/>
</dbReference>
<dbReference type="Orphanet" id="98993">
    <property type="disease" value="Early-onset posterior polar cataract"/>
</dbReference>
<dbReference type="Orphanet" id="98985">
    <property type="disease" value="Early-onset sutural cataract"/>
</dbReference>
<dbReference type="Orphanet" id="98994">
    <property type="disease" value="Total early-onset cataract"/>
</dbReference>
<dbReference type="PharmGKB" id="PA30821"/>
<dbReference type="VEuPathDB" id="HostDB:ENSG00000135517"/>
<dbReference type="eggNOG" id="KOG0223">
    <property type="taxonomic scope" value="Eukaryota"/>
</dbReference>
<dbReference type="GeneTree" id="ENSGT00940000156260"/>
<dbReference type="HOGENOM" id="CLU_020019_3_3_1"/>
<dbReference type="InParanoid" id="P30301"/>
<dbReference type="OMA" id="LALNTMH"/>
<dbReference type="OrthoDB" id="3222at2759"/>
<dbReference type="PAN-GO" id="P30301">
    <property type="GO annotations" value="5 GO annotations based on evolutionary models"/>
</dbReference>
<dbReference type="PhylomeDB" id="P30301"/>
<dbReference type="TreeFam" id="TF312940"/>
<dbReference type="PathwayCommons" id="P30301"/>
<dbReference type="Reactome" id="R-HSA-432047">
    <property type="pathway name" value="Passive transport by Aquaporins"/>
</dbReference>
<dbReference type="SignaLink" id="P30301"/>
<dbReference type="SIGNOR" id="P30301"/>
<dbReference type="BioGRID-ORCS" id="4284">
    <property type="hits" value="12 hits in 1152 CRISPR screens"/>
</dbReference>
<dbReference type="ChiTaRS" id="MIP">
    <property type="organism name" value="human"/>
</dbReference>
<dbReference type="GeneWiki" id="MIP_(gene)"/>
<dbReference type="GenomeRNAi" id="4284"/>
<dbReference type="Pharos" id="P30301">
    <property type="development level" value="Tbio"/>
</dbReference>
<dbReference type="PRO" id="PR:P30301"/>
<dbReference type="Proteomes" id="UP000005640">
    <property type="component" value="Chromosome 12"/>
</dbReference>
<dbReference type="RNAct" id="P30301">
    <property type="molecule type" value="protein"/>
</dbReference>
<dbReference type="Bgee" id="ENSG00000135517">
    <property type="expression patterns" value="Expressed in male germ line stem cell (sensu Vertebrata) in testis and 73 other cell types or tissues"/>
</dbReference>
<dbReference type="GO" id="GO:0070161">
    <property type="term" value="C:anchoring junction"/>
    <property type="evidence" value="ECO:0007669"/>
    <property type="project" value="UniProtKB-SubCell"/>
</dbReference>
<dbReference type="GO" id="GO:0016324">
    <property type="term" value="C:apical plasma membrane"/>
    <property type="evidence" value="ECO:0000318"/>
    <property type="project" value="GO_Central"/>
</dbReference>
<dbReference type="GO" id="GO:0005886">
    <property type="term" value="C:plasma membrane"/>
    <property type="evidence" value="ECO:0000314"/>
    <property type="project" value="UniProtKB"/>
</dbReference>
<dbReference type="GO" id="GO:0005516">
    <property type="term" value="F:calmodulin binding"/>
    <property type="evidence" value="ECO:0000250"/>
    <property type="project" value="UniProtKB"/>
</dbReference>
<dbReference type="GO" id="GO:0098631">
    <property type="term" value="F:cell adhesion mediator activity"/>
    <property type="evidence" value="ECO:0000314"/>
    <property type="project" value="UniProtKB"/>
</dbReference>
<dbReference type="GO" id="GO:0005212">
    <property type="term" value="F:structural constituent of eye lens"/>
    <property type="evidence" value="ECO:0007669"/>
    <property type="project" value="UniProtKB-KW"/>
</dbReference>
<dbReference type="GO" id="GO:0015250">
    <property type="term" value="F:water channel activity"/>
    <property type="evidence" value="ECO:0000314"/>
    <property type="project" value="UniProtKB"/>
</dbReference>
<dbReference type="GO" id="GO:1990349">
    <property type="term" value="P:gap junction-mediated intercellular transport"/>
    <property type="evidence" value="ECO:0000315"/>
    <property type="project" value="UniProtKB"/>
</dbReference>
<dbReference type="GO" id="GO:0034109">
    <property type="term" value="P:homotypic cell-cell adhesion"/>
    <property type="evidence" value="ECO:0000314"/>
    <property type="project" value="UniProtKB"/>
</dbReference>
<dbReference type="GO" id="GO:0002088">
    <property type="term" value="P:lens development in camera-type eye"/>
    <property type="evidence" value="ECO:0007669"/>
    <property type="project" value="Ensembl"/>
</dbReference>
<dbReference type="GO" id="GO:0036438">
    <property type="term" value="P:maintenance of lens transparency"/>
    <property type="evidence" value="ECO:0000315"/>
    <property type="project" value="UniProtKB"/>
</dbReference>
<dbReference type="GO" id="GO:0007601">
    <property type="term" value="P:visual perception"/>
    <property type="evidence" value="ECO:0007669"/>
    <property type="project" value="UniProtKB-KW"/>
</dbReference>
<dbReference type="GO" id="GO:0006833">
    <property type="term" value="P:water transport"/>
    <property type="evidence" value="ECO:0000314"/>
    <property type="project" value="UniProtKB"/>
</dbReference>
<dbReference type="CDD" id="cd00333">
    <property type="entry name" value="MIP"/>
    <property type="match status" value="1"/>
</dbReference>
<dbReference type="FunFam" id="1.20.1080.10:FF:000003">
    <property type="entry name" value="Lens fiber major intrinsic"/>
    <property type="match status" value="1"/>
</dbReference>
<dbReference type="Gene3D" id="1.20.1080.10">
    <property type="entry name" value="Glycerol uptake facilitator protein"/>
    <property type="match status" value="1"/>
</dbReference>
<dbReference type="InterPro" id="IPR023271">
    <property type="entry name" value="Aquaporin-like"/>
</dbReference>
<dbReference type="InterPro" id="IPR034294">
    <property type="entry name" value="Aquaporin_transptr"/>
</dbReference>
<dbReference type="InterPro" id="IPR000425">
    <property type="entry name" value="MIP"/>
</dbReference>
<dbReference type="InterPro" id="IPR022357">
    <property type="entry name" value="MIP_CS"/>
</dbReference>
<dbReference type="NCBIfam" id="TIGR00861">
    <property type="entry name" value="MIP"/>
    <property type="match status" value="1"/>
</dbReference>
<dbReference type="PANTHER" id="PTHR19139">
    <property type="entry name" value="AQUAPORIN TRANSPORTER"/>
    <property type="match status" value="1"/>
</dbReference>
<dbReference type="PANTHER" id="PTHR19139:SF39">
    <property type="entry name" value="LENS FIBER MAJOR INTRINSIC PROTEIN"/>
    <property type="match status" value="1"/>
</dbReference>
<dbReference type="Pfam" id="PF00230">
    <property type="entry name" value="MIP"/>
    <property type="match status" value="1"/>
</dbReference>
<dbReference type="PRINTS" id="PR02014">
    <property type="entry name" value="AQUAPORIN2"/>
</dbReference>
<dbReference type="PRINTS" id="PR00783">
    <property type="entry name" value="MINTRINSICP"/>
</dbReference>
<dbReference type="SUPFAM" id="SSF81338">
    <property type="entry name" value="Aquaporin-like"/>
    <property type="match status" value="1"/>
</dbReference>
<dbReference type="PROSITE" id="PS00221">
    <property type="entry name" value="MIP"/>
    <property type="match status" value="1"/>
</dbReference>
<sequence>MWELRSASFWRAIFAEFFATLFYVFFGLGSSLRWAPGPLHVLQVAMAFGLALATLVQSVGHISGAHVNPAVTFAFLVGSQMSLLRAFCYMAAQLLGAVAGAAVLYSVTPPAVRGNLALNTLHPAVSVGQATTVEIFLTLQFVLCIFATYDERRNGQLGSVALAVGFSLALGHLFGMYYTGAGMNPARSFAPAILTGNFTNHWVYWVGPIIGGGLGSLLYDFLLFPRLKSISERLSVLKGAKPDVSNGQPEVTGEPVELNTQAL</sequence>
<keyword id="KW-0898">Cataract</keyword>
<keyword id="KW-0965">Cell junction</keyword>
<keyword id="KW-1003">Cell membrane</keyword>
<keyword id="KW-0225">Disease variant</keyword>
<keyword id="KW-0273">Eye lens protein</keyword>
<keyword id="KW-0449">Lipoprotein</keyword>
<keyword id="KW-0472">Membrane</keyword>
<keyword id="KW-0564">Palmitate</keyword>
<keyword id="KW-0597">Phosphoprotein</keyword>
<keyword id="KW-1185">Reference proteome</keyword>
<keyword id="KW-0677">Repeat</keyword>
<keyword id="KW-0716">Sensory transduction</keyword>
<keyword id="KW-0812">Transmembrane</keyword>
<keyword id="KW-1133">Transmembrane helix</keyword>
<keyword id="KW-0813">Transport</keyword>
<keyword id="KW-0844">Vision</keyword>
<feature type="chain" id="PRO_0000063912" description="Lens fiber major intrinsic protein">
    <location>
        <begin position="1"/>
        <end position="263"/>
    </location>
</feature>
<feature type="topological domain" description="Cytoplasmic" evidence="1">
    <location>
        <begin position="1"/>
        <end position="9"/>
    </location>
</feature>
<feature type="transmembrane region" description="Helical; Name=1" evidence="1">
    <location>
        <begin position="10"/>
        <end position="29"/>
    </location>
</feature>
<feature type="topological domain" description="Extracellular" evidence="1">
    <location>
        <begin position="30"/>
        <end position="41"/>
    </location>
</feature>
<feature type="transmembrane region" description="Helical; Name=2" evidence="1">
    <location>
        <begin position="42"/>
        <end position="59"/>
    </location>
</feature>
<feature type="topological domain" description="Cytoplasmic" evidence="1">
    <location>
        <begin position="60"/>
        <end position="61"/>
    </location>
</feature>
<feature type="intramembrane region" description="Discontinuously helical" evidence="1">
    <location>
        <begin position="62"/>
        <end position="77"/>
    </location>
</feature>
<feature type="topological domain" description="Cytoplasmic" evidence="1">
    <location>
        <begin position="78"/>
        <end position="82"/>
    </location>
</feature>
<feature type="transmembrane region" description="Helical; Name=3" evidence="1">
    <location>
        <begin position="83"/>
        <end position="106"/>
    </location>
</feature>
<feature type="topological domain" description="Extracellular" evidence="1">
    <location>
        <begin position="107"/>
        <end position="127"/>
    </location>
</feature>
<feature type="transmembrane region" description="Helical; Name=4" evidence="1">
    <location>
        <begin position="128"/>
        <end position="148"/>
    </location>
</feature>
<feature type="topological domain" description="Cytoplasmic" evidence="1">
    <location>
        <begin position="149"/>
        <end position="156"/>
    </location>
</feature>
<feature type="transmembrane region" description="Helical; Name=5" evidence="1">
    <location>
        <begin position="157"/>
        <end position="175"/>
    </location>
</feature>
<feature type="topological domain" description="Extracellular" evidence="1">
    <location>
        <begin position="176"/>
        <end position="178"/>
    </location>
</feature>
<feature type="intramembrane region" description="Discontinuously helical" evidence="1">
    <location>
        <begin position="179"/>
        <end position="193"/>
    </location>
</feature>
<feature type="topological domain" description="Extracellular" evidence="1">
    <location>
        <begin position="194"/>
        <end position="200"/>
    </location>
</feature>
<feature type="transmembrane region" description="Helical; Name=6" evidence="1">
    <location>
        <begin position="201"/>
        <end position="222"/>
    </location>
</feature>
<feature type="topological domain" description="Cytoplasmic" evidence="1">
    <location>
        <begin position="223"/>
        <end position="263"/>
    </location>
</feature>
<feature type="region of interest" description="Interaction with CALM" evidence="1">
    <location>
        <begin position="227"/>
        <end position="237"/>
    </location>
</feature>
<feature type="short sequence motif" description="NPA 1" evidence="1">
    <location>
        <begin position="68"/>
        <end position="70"/>
    </location>
</feature>
<feature type="short sequence motif" description="NPA 2" evidence="1">
    <location>
        <begin position="184"/>
        <end position="186"/>
    </location>
</feature>
<feature type="site" description="Important for water channel gating" evidence="1">
    <location>
        <position position="149"/>
    </location>
</feature>
<feature type="site" description="Interaction with BFSP1" evidence="1">
    <location>
        <position position="246"/>
    </location>
</feature>
<feature type="site" description="interaction with BFSP1" evidence="1">
    <location>
        <position position="250"/>
    </location>
</feature>
<feature type="modified residue" description="Phosphoserine" evidence="3">
    <location>
        <position position="235"/>
    </location>
</feature>
<feature type="modified residue" description="Phosphoserine" evidence="1">
    <location>
        <position position="245"/>
    </location>
</feature>
<feature type="modified residue" description="Deamidated asparagine; by deterioration" evidence="3">
    <location>
        <position position="246"/>
    </location>
</feature>
<feature type="modified residue" description="Deamidated asparagine; by deterioration" evidence="3">
    <location>
        <position position="259"/>
    </location>
</feature>
<feature type="sequence variant" id="VAR_071601" description="In CTRCT15; reduced cell-to-cell adhesion; no effetc on plasma membrane localization; no effect on water channel activity; dbSNP:rs864309693." evidence="7 12">
    <original>R</original>
    <variation>C</variation>
    <location>
        <position position="33"/>
    </location>
</feature>
<feature type="sequence variant" id="VAR_071602" description="In CTRCT15; likely benign; dbSNP:rs74641138." evidence="9">
    <original>V</original>
    <variation>I</variation>
    <location>
        <position position="107"/>
    </location>
</feature>
<feature type="sequence variant" id="VAR_011497" description="In CTRCT15; non-progressive lamellar cataract; loss of localization to the plasma membrane; dominant negative effect on water transport; dbSNP:rs121917869." evidence="4 5">
    <original>E</original>
    <variation>G</variation>
    <location>
        <position position="134"/>
    </location>
</feature>
<feature type="sequence variant" id="VAR_011498" description="In CTRCT15; progressive polymorphic and lamellar cataract; loss of localization to the plasma membrane; dominant negative effect on water transport; dbSNP:rs121917867." evidence="4 5">
    <original>T</original>
    <variation>R</variation>
    <location>
        <position position="138"/>
    </location>
</feature>
<feature type="sequence variant" id="VAR_075528" description="In CTRCT15; loss of localization to the plasma membrane; dbSNP:rs778327521." evidence="13">
    <original>D</original>
    <variation>H</variation>
    <location>
        <position position="150"/>
    </location>
</feature>
<feature type="sequence variant" id="VAR_075529" description="In CTRCT15; uncertain significance; loss of localization to the plasma membrane." evidence="11 16">
    <original>G</original>
    <variation>D</variation>
    <location>
        <position position="165"/>
    </location>
</feature>
<feature type="sequence variant" id="VAR_084819" description="In CTRCT15; uncertain significance." evidence="16">
    <original>Y</original>
    <variation>C</variation>
    <location>
        <position position="177"/>
    </location>
</feature>
<feature type="sequence variant" id="VAR_071603" description="In CTRCT15; dbSNP:rs267603585." evidence="10">
    <original>R</original>
    <variation>C</variation>
    <location>
        <position position="187"/>
    </location>
</feature>
<feature type="sequence variant" id="VAR_084820" description="In CTRCT15; uncertain significance." evidence="16">
    <location>
        <begin position="204"/>
        <end position="263"/>
    </location>
</feature>
<feature type="sequence variant" id="VAR_084821" description="In CTRCT15; uncertain significance." evidence="15">
    <location>
        <begin position="211"/>
        <end position="263"/>
    </location>
</feature>
<feature type="sequence variant" id="VAR_071604" description="In CTRCT15; dbSNP:rs1555179699." evidence="8">
    <original>R</original>
    <variation>K</variation>
    <location>
        <position position="233"/>
    </location>
</feature>
<reference key="1">
    <citation type="journal article" date="1991" name="Genomics">
        <title>Genomic cloning, complete nucleotide sequence, and structure of the human gene encoding the major intrinsic protein (MIP) of the lens.</title>
        <authorList>
            <person name="Pisano M.M."/>
            <person name="Chepelinsky A.B."/>
        </authorList>
    </citation>
    <scope>NUCLEOTIDE SEQUENCE [GENOMIC DNA]</scope>
</reference>
<reference key="2">
    <citation type="journal article" date="2006" name="Nature">
        <title>The finished DNA sequence of human chromosome 12.</title>
        <authorList>
            <person name="Scherer S.E."/>
            <person name="Muzny D.M."/>
            <person name="Buhay C.J."/>
            <person name="Chen R."/>
            <person name="Cree A."/>
            <person name="Ding Y."/>
            <person name="Dugan-Rocha S."/>
            <person name="Gill R."/>
            <person name="Gunaratne P."/>
            <person name="Harris R.A."/>
            <person name="Hawes A.C."/>
            <person name="Hernandez J."/>
            <person name="Hodgson A.V."/>
            <person name="Hume J."/>
            <person name="Jackson A."/>
            <person name="Khan Z.M."/>
            <person name="Kovar-Smith C."/>
            <person name="Lewis L.R."/>
            <person name="Lozado R.J."/>
            <person name="Metzker M.L."/>
            <person name="Milosavljevic A."/>
            <person name="Miner G.R."/>
            <person name="Montgomery K.T."/>
            <person name="Morgan M.B."/>
            <person name="Nazareth L.V."/>
            <person name="Scott G."/>
            <person name="Sodergren E."/>
            <person name="Song X.-Z."/>
            <person name="Steffen D."/>
            <person name="Lovering R.C."/>
            <person name="Wheeler D.A."/>
            <person name="Worley K.C."/>
            <person name="Yuan Y."/>
            <person name="Zhang Z."/>
            <person name="Adams C.Q."/>
            <person name="Ansari-Lari M.A."/>
            <person name="Ayele M."/>
            <person name="Brown M.J."/>
            <person name="Chen G."/>
            <person name="Chen Z."/>
            <person name="Clerc-Blankenburg K.P."/>
            <person name="Davis C."/>
            <person name="Delgado O."/>
            <person name="Dinh H.H."/>
            <person name="Draper H."/>
            <person name="Gonzalez-Garay M.L."/>
            <person name="Havlak P."/>
            <person name="Jackson L.R."/>
            <person name="Jacob L.S."/>
            <person name="Kelly S.H."/>
            <person name="Li L."/>
            <person name="Li Z."/>
            <person name="Liu J."/>
            <person name="Liu W."/>
            <person name="Lu J."/>
            <person name="Maheshwari M."/>
            <person name="Nguyen B.-V."/>
            <person name="Okwuonu G.O."/>
            <person name="Pasternak S."/>
            <person name="Perez L.M."/>
            <person name="Plopper F.J.H."/>
            <person name="Santibanez J."/>
            <person name="Shen H."/>
            <person name="Tabor P.E."/>
            <person name="Verduzco D."/>
            <person name="Waldron L."/>
            <person name="Wang Q."/>
            <person name="Williams G.A."/>
            <person name="Zhang J."/>
            <person name="Zhou J."/>
            <person name="Allen C.C."/>
            <person name="Amin A.G."/>
            <person name="Anyalebechi V."/>
            <person name="Bailey M."/>
            <person name="Barbaria J.A."/>
            <person name="Bimage K.E."/>
            <person name="Bryant N.P."/>
            <person name="Burch P.E."/>
            <person name="Burkett C.E."/>
            <person name="Burrell K.L."/>
            <person name="Calderon E."/>
            <person name="Cardenas V."/>
            <person name="Carter K."/>
            <person name="Casias K."/>
            <person name="Cavazos I."/>
            <person name="Cavazos S.R."/>
            <person name="Ceasar H."/>
            <person name="Chacko J."/>
            <person name="Chan S.N."/>
            <person name="Chavez D."/>
            <person name="Christopoulos C."/>
            <person name="Chu J."/>
            <person name="Cockrell R."/>
            <person name="Cox C.D."/>
            <person name="Dang M."/>
            <person name="Dathorne S.R."/>
            <person name="David R."/>
            <person name="Davis C.M."/>
            <person name="Davy-Carroll L."/>
            <person name="Deshazo D.R."/>
            <person name="Donlin J.E."/>
            <person name="D'Souza L."/>
            <person name="Eaves K.A."/>
            <person name="Egan A."/>
            <person name="Emery-Cohen A.J."/>
            <person name="Escotto M."/>
            <person name="Flagg N."/>
            <person name="Forbes L.D."/>
            <person name="Gabisi A.M."/>
            <person name="Garza M."/>
            <person name="Hamilton C."/>
            <person name="Henderson N."/>
            <person name="Hernandez O."/>
            <person name="Hines S."/>
            <person name="Hogues M.E."/>
            <person name="Huang M."/>
            <person name="Idlebird D.G."/>
            <person name="Johnson R."/>
            <person name="Jolivet A."/>
            <person name="Jones S."/>
            <person name="Kagan R."/>
            <person name="King L.M."/>
            <person name="Leal B."/>
            <person name="Lebow H."/>
            <person name="Lee S."/>
            <person name="LeVan J.M."/>
            <person name="Lewis L.C."/>
            <person name="London P."/>
            <person name="Lorensuhewa L.M."/>
            <person name="Loulseged H."/>
            <person name="Lovett D.A."/>
            <person name="Lucier A."/>
            <person name="Lucier R.L."/>
            <person name="Ma J."/>
            <person name="Madu R.C."/>
            <person name="Mapua P."/>
            <person name="Martindale A.D."/>
            <person name="Martinez E."/>
            <person name="Massey E."/>
            <person name="Mawhiney S."/>
            <person name="Meador M.G."/>
            <person name="Mendez S."/>
            <person name="Mercado C."/>
            <person name="Mercado I.C."/>
            <person name="Merritt C.E."/>
            <person name="Miner Z.L."/>
            <person name="Minja E."/>
            <person name="Mitchell T."/>
            <person name="Mohabbat F."/>
            <person name="Mohabbat K."/>
            <person name="Montgomery B."/>
            <person name="Moore N."/>
            <person name="Morris S."/>
            <person name="Munidasa M."/>
            <person name="Ngo R.N."/>
            <person name="Nguyen N.B."/>
            <person name="Nickerson E."/>
            <person name="Nwaokelemeh O.O."/>
            <person name="Nwokenkwo S."/>
            <person name="Obregon M."/>
            <person name="Oguh M."/>
            <person name="Oragunye N."/>
            <person name="Oviedo R.J."/>
            <person name="Parish B.J."/>
            <person name="Parker D.N."/>
            <person name="Parrish J."/>
            <person name="Parks K.L."/>
            <person name="Paul H.A."/>
            <person name="Payton B.A."/>
            <person name="Perez A."/>
            <person name="Perrin W."/>
            <person name="Pickens A."/>
            <person name="Primus E.L."/>
            <person name="Pu L.-L."/>
            <person name="Puazo M."/>
            <person name="Quiles M.M."/>
            <person name="Quiroz J.B."/>
            <person name="Rabata D."/>
            <person name="Reeves K."/>
            <person name="Ruiz S.J."/>
            <person name="Shao H."/>
            <person name="Sisson I."/>
            <person name="Sonaike T."/>
            <person name="Sorelle R.P."/>
            <person name="Sutton A.E."/>
            <person name="Svatek A.F."/>
            <person name="Svetz L.A."/>
            <person name="Tamerisa K.S."/>
            <person name="Taylor T.R."/>
            <person name="Teague B."/>
            <person name="Thomas N."/>
            <person name="Thorn R.D."/>
            <person name="Trejos Z.Y."/>
            <person name="Trevino B.K."/>
            <person name="Ukegbu O.N."/>
            <person name="Urban J.B."/>
            <person name="Vasquez L.I."/>
            <person name="Vera V.A."/>
            <person name="Villasana D.M."/>
            <person name="Wang L."/>
            <person name="Ward-Moore S."/>
            <person name="Warren J.T."/>
            <person name="Wei X."/>
            <person name="White F."/>
            <person name="Williamson A.L."/>
            <person name="Wleczyk R."/>
            <person name="Wooden H.S."/>
            <person name="Wooden S.H."/>
            <person name="Yen J."/>
            <person name="Yoon L."/>
            <person name="Yoon V."/>
            <person name="Zorrilla S.E."/>
            <person name="Nelson D."/>
            <person name="Kucherlapati R."/>
            <person name="Weinstock G."/>
            <person name="Gibbs R.A."/>
        </authorList>
    </citation>
    <scope>NUCLEOTIDE SEQUENCE [LARGE SCALE GENOMIC DNA]</scope>
</reference>
<reference key="3">
    <citation type="journal article" date="2004" name="Genome Res.">
        <title>The status, quality, and expansion of the NIH full-length cDNA project: the Mammalian Gene Collection (MGC).</title>
        <authorList>
            <consortium name="The MGC Project Team"/>
        </authorList>
    </citation>
    <scope>NUCLEOTIDE SEQUENCE [LARGE SCALE MRNA]</scope>
    <source>
        <tissue>Testis</tissue>
    </source>
</reference>
<reference key="4">
    <citation type="journal article" date="2000" name="Invest. Ophthalmol. Vis. Sci.">
        <title>Characterization of human lens major intrinsic protein structure.</title>
        <authorList>
            <person name="Schey K.L."/>
            <person name="Little M."/>
            <person name="Fowler J.G."/>
            <person name="Crouch R.K."/>
        </authorList>
    </citation>
    <scope>PHOSPHORYLATION AT SER-235</scope>
    <scope>DEAMIDATION AT ASN-246 AND ASN-259</scope>
    <scope>IDENTIFICATION BY MASS SPECTROMETRY</scope>
</reference>
<reference key="5">
    <citation type="journal article" date="2000" name="Nat. Genet.">
        <title>Missense mutations in MIP underlie autosomal dominant 'polymorphic' and lamellar cataracts linked to 12q.</title>
        <authorList>
            <person name="Berry V."/>
            <person name="Francis P."/>
            <person name="Kaushal S."/>
            <person name="Moore A."/>
            <person name="Bhattacharya S."/>
        </authorList>
    </citation>
    <scope>INVOLVEMENT IN CTRCT15</scope>
    <scope>VARIANTS CTRCT15 GLY-134 AND ARG-138</scope>
</reference>
<reference key="6">
    <citation type="journal article" date="2006" name="Am. J. Ophthalmol.">
        <title>Novel single-base deletional mutation in major intrinsic protein (MIP) in autosomal dominant cataract.</title>
        <authorList>
            <person name="Geyer D.D."/>
            <person name="Spence M.A."/>
            <person name="Johannes M."/>
            <person name="Flodman P."/>
            <person name="Clancy K.P."/>
            <person name="Berry R."/>
            <person name="Sparkes R.S."/>
            <person name="Jonsen M.D."/>
            <person name="Isenberg S.J."/>
            <person name="Bateman J.B."/>
        </authorList>
    </citation>
    <scope>INVOLVEMENT IN CTRCT15</scope>
</reference>
<reference key="7">
    <citation type="journal article" date="2016" name="Biochim. Biophys. Acta">
        <title>The lipidation profile of aquaporin-0 correlates with the acyl composition of phosphoethanolamine lipids in lens membranes.</title>
        <authorList>
            <person name="Ismail V.S."/>
            <person name="Mosely J.A."/>
            <person name="Tapodi A."/>
            <person name="Quinlan R.A."/>
            <person name="Sanderson J.M."/>
        </authorList>
    </citation>
    <scope>FATTY ACYLATION</scope>
</reference>
<reference key="8">
    <citation type="journal article" date="2019" name="Exp. Eye Res.">
        <title>BFSP1 C-terminal domains released by post-translational processing events can alter significantly the calcium regulation of AQP0 water permeability.</title>
        <authorList>
            <person name="Tapodi A."/>
            <person name="Clemens D.M."/>
            <person name="Uwineza A."/>
            <person name="Goldberg M.W."/>
            <person name="Thinon E."/>
            <person name="Heal W.P."/>
            <person name="Tate E.W."/>
            <person name="Nemeth-Cahalan K."/>
            <person name="Vorontsova I."/>
            <person name="Jarrin M."/>
            <person name="Hall J.E."/>
            <person name="Quinlan R.A."/>
        </authorList>
    </citation>
    <scope>ACTIVITY REGULATION</scope>
    <scope>SUBCELLULAR LOCATION</scope>
    <scope>TISSUE SPECIFICITY</scope>
</reference>
<reference key="9">
    <citation type="journal article" date="2000" name="Hum. Mol. Genet.">
        <title>Functional impairment of lens aquaporin in two families with dominantly inherited cataracts.</title>
        <authorList>
            <person name="Francis P."/>
            <person name="Chung J.-J."/>
            <person name="Yasui M."/>
            <person name="Berry V."/>
            <person name="Moore A."/>
            <person name="Wyatt M.K."/>
            <person name="Wistow G."/>
            <person name="Bhattacharya S.S."/>
            <person name="Agre P."/>
        </authorList>
    </citation>
    <scope>CHARACTERIZATION OF VARIANTS CTRCT15 GLY-134 AND ARG-138</scope>
    <scope>FUNCTION</scope>
    <scope>SUBCELLULAR LOCATION</scope>
</reference>
<reference key="10">
    <citation type="journal article" date="2007" name="Mol. Vis.">
        <title>A novel mutation in major intrinsic protein of the lens gene (MIP) underlies autosomal dominant cataract in a Chinese family.</title>
        <authorList>
            <person name="Gu F."/>
            <person name="Zhai H."/>
            <person name="Li D."/>
            <person name="Zhao L."/>
            <person name="Li C."/>
            <person name="Huang S."/>
            <person name="Ma X."/>
        </authorList>
    </citation>
    <scope>VARIANT CTRCT15 CYS-33</scope>
</reference>
<reference key="11">
    <citation type="journal article" date="2007" name="Mol. Vis.">
        <title>A substitution of arginine to lysine at the COOH-terminus of MIP caused a different binocular phenotype in a congenital cataract family.</title>
        <authorList>
            <person name="Lin H."/>
            <person name="Hejtmancik J.F."/>
            <person name="Qi Y."/>
        </authorList>
    </citation>
    <scope>VARIANT CTRCT15 LYS-233</scope>
</reference>
<reference key="12">
    <citation type="journal article" date="2010" name="Mol. Vis.">
        <title>A novel mutation in the major intrinsic protein (MIP) associated with autosomal dominant congenital cataracts in a Chinese family.</title>
        <authorList>
            <person name="Wang W."/>
            <person name="Jiang J."/>
            <person name="Zhu Y."/>
            <person name="Li J."/>
            <person name="Jin C."/>
            <person name="Shentu X."/>
            <person name="Yao K."/>
        </authorList>
    </citation>
    <scope>VARIANT CTRCT15 ILE-107</scope>
</reference>
<reference key="13">
    <citation type="journal article" date="2011" name="Mol. Vis.">
        <title>A novel mutation in MIP associated with congenital nuclear cataract in a Chinese family.</title>
        <authorList>
            <person name="Wang K.J."/>
            <person name="Li S.S."/>
            <person name="Yun B."/>
            <person name="Ma W.X."/>
            <person name="Jiang T.G."/>
            <person name="Zhu S.Q."/>
        </authorList>
    </citation>
    <scope>VARIANT CTRCT15 CYS-187</scope>
</reference>
<reference key="14">
    <citation type="journal article" date="2013" name="Exp. Eye Res.">
        <title>An MIP/AQP0 mutation with impaired trafficking and function underlies an autosomal dominant congenital lamellar cataract.</title>
        <authorList>
            <person name="Senthil Kumar G."/>
            <person name="Kyle J.W."/>
            <person name="Minogue P.J."/>
            <person name="Dinesh Kumar K."/>
            <person name="Vasantha K."/>
            <person name="Berthoud V.M."/>
            <person name="Beyer E.C."/>
            <person name="Santhiya S.T."/>
        </authorList>
    </citation>
    <scope>VARIANT CTRCT15 ASP-165</scope>
    <scope>CHARACTERIZATION OF VARIANT CTRCT15 ASP-165</scope>
    <scope>SUBCELLULAR LOCATION</scope>
</reference>
<reference key="15">
    <citation type="journal article" date="2013" name="Exp. Eye Res.">
        <title>Functional characterization of an AQP0 missense mutation, R33C, that causes dominant congenital lens cataract, reveals impaired cell-to-cell adhesion.</title>
        <authorList>
            <person name="Kumari S.S."/>
            <person name="Gandhi J."/>
            <person name="Mustehsan M.H."/>
            <person name="Eren S."/>
            <person name="Varadaraj K."/>
        </authorList>
    </citation>
    <scope>VARIANT CTRCT15 CYS-33</scope>
    <scope>CHARACTERIZATION OF VARIANT CTRCT15 CYS-33</scope>
    <scope>FUNCTION</scope>
    <scope>TRANSPORTER ACTIVITY</scope>
    <scope>TISSUE SPECIFICITY</scope>
</reference>
<reference key="16">
    <citation type="journal article" date="2015" name="PLoS ONE">
        <title>Identification and functional analysis of a novel MIP gene mutation associated with congenital cataract in a Chinese family.</title>
        <authorList>
            <person name="Shentu X."/>
            <person name="Miao Q."/>
            <person name="Tang X."/>
            <person name="Yin H."/>
            <person name="Zhao Y."/>
        </authorList>
    </citation>
    <scope>VARIANT CTRCT15 HIS-150</scope>
    <scope>CHARACTERIZATION OF VARIANT CTRCT15 HIS-150</scope>
    <scope>SUBCELLULAR LOCATION</scope>
</reference>
<reference key="17">
    <citation type="journal article" date="2017" name="G3 (Bethesda)">
        <title>High-Throughput Genetic Screening of 51 Pediatric Cataract Genes Identifies Causative Mutations in Inherited Pediatric Cataract in South Eastern Australia.</title>
        <authorList>
            <person name="Javadiyan S."/>
            <person name="Craig J.E."/>
            <person name="Souzeau E."/>
            <person name="Sharma S."/>
            <person name="Lower K.M."/>
            <person name="Mackey D.A."/>
            <person name="Staffieri S.E."/>
            <person name="Elder J.E."/>
            <person name="Taranath D."/>
            <person name="Straga T."/>
            <person name="Black J."/>
            <person name="Pater J."/>
            <person name="Casey T."/>
            <person name="Hewitt A.W."/>
            <person name="Burdon K.P."/>
        </authorList>
    </citation>
    <scope>VARIANT CTRCT15 211-GLY--LEU-263 DEL</scope>
</reference>
<reference key="18">
    <citation type="journal article" date="2018" name="Orphanet J. Rare Dis.">
        <title>Clinical and genetic characteristics of Chinese patients with familial or sporadic pediatric cataract.</title>
        <authorList>
            <person name="Li J."/>
            <person name="Leng Y."/>
            <person name="Han S."/>
            <person name="Yan L."/>
            <person name="Lu C."/>
            <person name="Luo Y."/>
            <person name="Zhang X."/>
            <person name="Cao L."/>
        </authorList>
    </citation>
    <scope>VARIANTS CTRCT15 ASP-165; CYS-177 AND 204-TYR--LEU-263 DEL</scope>
</reference>
<gene>
    <name evidence="21" type="primary">MIP</name>
    <name type="synonym">AQP0</name>
</gene>
<organism>
    <name type="scientific">Homo sapiens</name>
    <name type="common">Human</name>
    <dbReference type="NCBI Taxonomy" id="9606"/>
    <lineage>
        <taxon>Eukaryota</taxon>
        <taxon>Metazoa</taxon>
        <taxon>Chordata</taxon>
        <taxon>Craniata</taxon>
        <taxon>Vertebrata</taxon>
        <taxon>Euteleostomi</taxon>
        <taxon>Mammalia</taxon>
        <taxon>Eutheria</taxon>
        <taxon>Euarchontoglires</taxon>
        <taxon>Primates</taxon>
        <taxon>Haplorrhini</taxon>
        <taxon>Catarrhini</taxon>
        <taxon>Hominidae</taxon>
        <taxon>Homo</taxon>
    </lineage>
</organism>
<evidence type="ECO:0000250" key="1">
    <source>
        <dbReference type="UniProtKB" id="P06624"/>
    </source>
</evidence>
<evidence type="ECO:0000250" key="2">
    <source>
        <dbReference type="UniProtKB" id="Q6J8I9"/>
    </source>
</evidence>
<evidence type="ECO:0000269" key="3">
    <source>
    </source>
</evidence>
<evidence type="ECO:0000269" key="4">
    <source>
    </source>
</evidence>
<evidence type="ECO:0000269" key="5">
    <source>
    </source>
</evidence>
<evidence type="ECO:0000269" key="6">
    <source>
    </source>
</evidence>
<evidence type="ECO:0000269" key="7">
    <source>
    </source>
</evidence>
<evidence type="ECO:0000269" key="8">
    <source>
    </source>
</evidence>
<evidence type="ECO:0000269" key="9">
    <source>
    </source>
</evidence>
<evidence type="ECO:0000269" key="10">
    <source>
    </source>
</evidence>
<evidence type="ECO:0000269" key="11">
    <source>
    </source>
</evidence>
<evidence type="ECO:0000269" key="12">
    <source>
    </source>
</evidence>
<evidence type="ECO:0000269" key="13">
    <source>
    </source>
</evidence>
<evidence type="ECO:0000269" key="14">
    <source>
    </source>
</evidence>
<evidence type="ECO:0000269" key="15">
    <source>
    </source>
</evidence>
<evidence type="ECO:0000269" key="16">
    <source>
    </source>
</evidence>
<evidence type="ECO:0000269" key="17">
    <source>
    </source>
</evidence>
<evidence type="ECO:0000303" key="18">
    <source>
    </source>
</evidence>
<evidence type="ECO:0000303" key="19">
    <source>
    </source>
</evidence>
<evidence type="ECO:0000305" key="20"/>
<evidence type="ECO:0000312" key="21">
    <source>
        <dbReference type="HGNC" id="HGNC:7103"/>
    </source>
</evidence>
<comment type="function">
    <text evidence="5 12">Aquaporins form homotetrameric transmembrane channels, with each monomer independently mediating water transport across the plasma membrane along its osmotic gradient (PubMed:11001937, PubMed:24120416). Specifically expressed in lens fiber cells, this aquaporin is crucial for maintaining lens water homeostasis and transparency. Beyond water permeability, it also acts as a cell-to-cell adhesion molecule, forming thin junctions between lens fiber cells that are essential for maintaining the ordered structure and transparency of the lens (PubMed:24120416).</text>
</comment>
<comment type="catalytic activity">
    <reaction evidence="12">
        <text>H2O(in) = H2O(out)</text>
        <dbReference type="Rhea" id="RHEA:29667"/>
        <dbReference type="ChEBI" id="CHEBI:15377"/>
    </reaction>
</comment>
<comment type="activity regulation">
    <text evidence="17">The water channel activity is inhibited by calcium through calmodulin/CALM.</text>
</comment>
<comment type="subunit">
    <text evidence="1 17">Homotetramer; each monomer provides an independent water pore. Two homotetramers on opposing membranes can dimerize, forming a cell-cell junction (By similarity). Interacts with CALM; the calcium-calmodulin/CALM complex interacts with the cytoplasmic domains of two aquaporins, leading to channel closure (By similarity). Interacts with BFSP1 (via C-terminus); prevents calcium-dependent inhibition of the water channel activity (PubMed:30790544).</text>
</comment>
<comment type="interaction">
    <interactant intactId="EBI-8449636">
        <id>P30301</id>
    </interactant>
    <interactant intactId="EBI-19125216">
        <id>Q86WK6</id>
        <label>AMIGO1</label>
    </interactant>
    <organismsDiffer>false</organismsDiffer>
    <experiments>3</experiments>
</comment>
<comment type="interaction">
    <interactant intactId="EBI-8449636">
        <id>P30301</id>
    </interactant>
    <interactant intactId="EBI-17444777">
        <id>O43315</id>
        <label>AQP9</label>
    </interactant>
    <organismsDiffer>false</organismsDiffer>
    <experiments>3</experiments>
</comment>
<comment type="interaction">
    <interactant intactId="EBI-8449636">
        <id>P30301</id>
    </interactant>
    <interactant intactId="EBI-3904417">
        <id>Q99437</id>
        <label>ATP6V0B</label>
    </interactant>
    <organismsDiffer>false</organismsDiffer>
    <experiments>3</experiments>
</comment>
<comment type="interaction">
    <interactant intactId="EBI-8449636">
        <id>P30301</id>
    </interactant>
    <interactant intactId="EBI-525714">
        <id>P25942</id>
        <label>CD40</label>
    </interactant>
    <organismsDiffer>false</organismsDiffer>
    <experiments>3</experiments>
</comment>
<comment type="interaction">
    <interactant intactId="EBI-8449636">
        <id>P30301</id>
    </interactant>
    <interactant intactId="EBI-1045797">
        <id>Q8N5K1</id>
        <label>CISD2</label>
    </interactant>
    <organismsDiffer>false</organismsDiffer>
    <experiments>3</experiments>
</comment>
<comment type="interaction">
    <interactant intactId="EBI-8449636">
        <id>P30301</id>
    </interactant>
    <interactant intactId="EBI-18400628">
        <id>O00501</id>
        <label>CLDN5</label>
    </interactant>
    <organismsDiffer>false</organismsDiffer>
    <experiments>3</experiments>
</comment>
<comment type="interaction">
    <interactant intactId="EBI-8449636">
        <id>P30301</id>
    </interactant>
    <interactant intactId="EBI-781551">
        <id>Q9Y282</id>
        <label>ERGIC3</label>
    </interactant>
    <organismsDiffer>false</organismsDiffer>
    <experiments>3</experiments>
</comment>
<comment type="interaction">
    <interactant intactId="EBI-8449636">
        <id>P30301</id>
    </interactant>
    <interactant intactId="EBI-17973325">
        <id>P60508</id>
        <label>ERVFRD-1</label>
    </interactant>
    <organismsDiffer>false</organismsDiffer>
    <experiments>3</experiments>
</comment>
<comment type="interaction">
    <interactant intactId="EBI-8449636">
        <id>P30301</id>
    </interactant>
    <interactant intactId="EBI-18304435">
        <id>Q5JX71</id>
        <label>FAM209A</label>
    </interactant>
    <organismsDiffer>false</organismsDiffer>
    <experiments>3</experiments>
</comment>
<comment type="interaction">
    <interactant intactId="EBI-8449636">
        <id>P30301</id>
    </interactant>
    <interactant intactId="EBI-17187481">
        <id>P12318-2</id>
        <label>FCGR2A</label>
    </interactant>
    <organismsDiffer>false</organismsDiffer>
    <experiments>3</experiments>
</comment>
<comment type="interaction">
    <interactant intactId="EBI-8449636">
        <id>P30301</id>
    </interactant>
    <interactant intactId="EBI-10226858">
        <id>Q0VDC6</id>
        <label>FKBP1A</label>
    </interactant>
    <organismsDiffer>false</organismsDiffer>
    <experiments>3</experiments>
</comment>
<comment type="interaction">
    <interactant intactId="EBI-8449636">
        <id>P30301</id>
    </interactant>
    <interactant intactId="EBI-3909454">
        <id>O95377</id>
        <label>GJB5</label>
    </interactant>
    <organismsDiffer>false</organismsDiffer>
    <experiments>3</experiments>
</comment>
<comment type="interaction">
    <interactant intactId="EBI-8449636">
        <id>P30301</id>
    </interactant>
    <interactant intactId="EBI-712073">
        <id>Q8NBJ4</id>
        <label>GOLM1</label>
    </interactant>
    <organismsDiffer>false</organismsDiffer>
    <experiments>3</experiments>
</comment>
<comment type="interaction">
    <interactant intactId="EBI-8449636">
        <id>P30301</id>
    </interactant>
    <interactant intactId="EBI-11721746">
        <id>Q8TED1</id>
        <label>GPX8</label>
    </interactant>
    <organismsDiffer>false</organismsDiffer>
    <experiments>3</experiments>
</comment>
<comment type="interaction">
    <interactant intactId="EBI-8449636">
        <id>P30301</id>
    </interactant>
    <interactant intactId="EBI-356991">
        <id>P54652</id>
        <label>HSPA2</label>
    </interactant>
    <organismsDiffer>false</organismsDiffer>
    <experiments>3</experiments>
</comment>
<comment type="interaction">
    <interactant intactId="EBI-8449636">
        <id>P30301</id>
    </interactant>
    <interactant intactId="EBI-12017638">
        <id>P48051</id>
        <label>KCNJ6</label>
    </interactant>
    <organismsDiffer>false</organismsDiffer>
    <experiments>3</experiments>
</comment>
<comment type="interaction">
    <interactant intactId="EBI-8449636">
        <id>P30301</id>
    </interactant>
    <interactant intactId="EBI-2820517">
        <id>Q8TAF8</id>
        <label>LHFPL5</label>
    </interactant>
    <organismsDiffer>false</organismsDiffer>
    <experiments>3</experiments>
</comment>
<comment type="interaction">
    <interactant intactId="EBI-8449636">
        <id>P30301</id>
    </interactant>
    <interactant intactId="EBI-2830349">
        <id>Q7Z4F1</id>
        <label>LRP10</label>
    </interactant>
    <organismsDiffer>false</organismsDiffer>
    <experiments>3</experiments>
</comment>
<comment type="interaction">
    <interactant intactId="EBI-8449636">
        <id>P30301</id>
    </interactant>
    <interactant intactId="EBI-3925442">
        <id>Q9HCJ2</id>
        <label>LRRC4C</label>
    </interactant>
    <organismsDiffer>false</organismsDiffer>
    <experiments>3</experiments>
</comment>
<comment type="interaction">
    <interactant intactId="EBI-8449636">
        <id>P30301</id>
    </interactant>
    <interactant intactId="EBI-11956541">
        <id>Q9GZY8-5</id>
        <label>MFF</label>
    </interactant>
    <organismsDiffer>false</organismsDiffer>
    <experiments>3</experiments>
</comment>
<comment type="interaction">
    <interactant intactId="EBI-8449636">
        <id>P30301</id>
    </interactant>
    <interactant intactId="EBI-724754">
        <id>O14880</id>
        <label>MGST3</label>
    </interactant>
    <organismsDiffer>false</organismsDiffer>
    <experiments>3</experiments>
</comment>
<comment type="interaction">
    <interactant intactId="EBI-8449636">
        <id>P30301</id>
    </interactant>
    <interactant intactId="EBI-1045440">
        <id>Q9HC36</id>
        <label>MRM3</label>
    </interactant>
    <organismsDiffer>false</organismsDiffer>
    <experiments>3</experiments>
</comment>
<comment type="interaction">
    <interactant intactId="EBI-8449636">
        <id>P30301</id>
    </interactant>
    <interactant intactId="EBI-750085">
        <id>Q9Y676</id>
        <label>MRPS18B</label>
    </interactant>
    <organismsDiffer>false</organismsDiffer>
    <experiments>3</experiments>
</comment>
<comment type="interaction">
    <interactant intactId="EBI-8449636">
        <id>P30301</id>
    </interactant>
    <interactant intactId="EBI-17263240">
        <id>P15941-11</id>
        <label>MUC1</label>
    </interactant>
    <organismsDiffer>false</organismsDiffer>
    <experiments>3</experiments>
</comment>
<comment type="interaction">
    <interactant intactId="EBI-8449636">
        <id>P30301</id>
    </interactant>
    <interactant intactId="EBI-716063">
        <id>Q13113</id>
        <label>PDZK1IP1</label>
    </interactant>
    <organismsDiffer>false</organismsDiffer>
    <experiments>3</experiments>
</comment>
<comment type="interaction">
    <interactant intactId="EBI-8449636">
        <id>P30301</id>
    </interactant>
    <interactant intactId="EBI-10269209">
        <id>Q8NC24</id>
        <label>RELL2</label>
    </interactant>
    <organismsDiffer>false</organismsDiffer>
    <experiments>3</experiments>
</comment>
<comment type="interaction">
    <interactant intactId="EBI-8449636">
        <id>P30301</id>
    </interactant>
    <interactant intactId="EBI-3920694">
        <id>Q9NR31</id>
        <label>SAR1A</label>
    </interactant>
    <organismsDiffer>false</organismsDiffer>
    <experiments>3</experiments>
</comment>
<comment type="interaction">
    <interactant intactId="EBI-8449636">
        <id>P30301</id>
    </interactant>
    <interactant intactId="EBI-1046170">
        <id>O95470</id>
        <label>SGPL1</label>
    </interactant>
    <organismsDiffer>false</organismsDiffer>
    <experiments>3</experiments>
</comment>
<comment type="interaction">
    <interactant intactId="EBI-8449636">
        <id>P30301</id>
    </interactant>
    <interactant intactId="EBI-19141793">
        <id>Q13336-2</id>
        <label>SLC14A1</label>
    </interactant>
    <organismsDiffer>false</organismsDiffer>
    <experiments>3</experiments>
</comment>
<comment type="interaction">
    <interactant intactId="EBI-8449636">
        <id>P30301</id>
    </interactant>
    <interactant intactId="EBI-17595455">
        <id>P54219-3</id>
        <label>SLC18A1</label>
    </interactant>
    <organismsDiffer>false</organismsDiffer>
    <experiments>3</experiments>
</comment>
<comment type="interaction">
    <interactant intactId="EBI-8449636">
        <id>P30301</id>
    </interactant>
    <interactant intactId="EBI-17280858">
        <id>Q8WWF3</id>
        <label>SSMEM1</label>
    </interactant>
    <organismsDiffer>false</organismsDiffer>
    <experiments>3</experiments>
</comment>
<comment type="interaction">
    <interactant intactId="EBI-8449636">
        <id>P30301</id>
    </interactant>
    <interactant intactId="EBI-712466">
        <id>Q16623</id>
        <label>STX1A</label>
    </interactant>
    <organismsDiffer>false</organismsDiffer>
    <experiments>3</experiments>
</comment>
<comment type="interaction">
    <interactant intactId="EBI-8449636">
        <id>P30301</id>
    </interactant>
    <interactant intactId="EBI-11956649">
        <id>P32856-2</id>
        <label>STX2</label>
    </interactant>
    <organismsDiffer>false</organismsDiffer>
    <experiments>3</experiments>
</comment>
<comment type="interaction">
    <interactant intactId="EBI-8449636">
        <id>P30301</id>
    </interactant>
    <interactant intactId="EBI-10770179">
        <id>Q96A49</id>
        <label>SYAP1</label>
    </interactant>
    <organismsDiffer>false</organismsDiffer>
    <experiments>3</experiments>
</comment>
<comment type="interaction">
    <interactant intactId="EBI-8449636">
        <id>P30301</id>
    </interactant>
    <interactant intactId="EBI-524909">
        <id>P21579</id>
        <label>SYT1</label>
    </interactant>
    <organismsDiffer>false</organismsDiffer>
    <experiments>3</experiments>
</comment>
<comment type="interaction">
    <interactant intactId="EBI-8449636">
        <id>P30301</id>
    </interactant>
    <interactant intactId="EBI-8032987">
        <id>Q8N9I0</id>
        <label>SYT2</label>
    </interactant>
    <organismsDiffer>false</organismsDiffer>
    <experiments>3</experiments>
</comment>
<comment type="interaction">
    <interactant intactId="EBI-8449636">
        <id>P30301</id>
    </interactant>
    <interactant intactId="EBI-13351685">
        <id>Q96CE8</id>
        <label>TM4SF18</label>
    </interactant>
    <organismsDiffer>false</organismsDiffer>
    <experiments>3</experiments>
</comment>
<comment type="interaction">
    <interactant intactId="EBI-8449636">
        <id>P30301</id>
    </interactant>
    <interactant intactId="EBI-7238458">
        <id>Q8IV31</id>
        <label>TMEM139</label>
    </interactant>
    <organismsDiffer>false</organismsDiffer>
    <experiments>3</experiments>
</comment>
<comment type="interaction">
    <interactant intactId="EBI-8449636">
        <id>P30301</id>
    </interactant>
    <interactant intactId="EBI-13329239">
        <id>Q6P9G4</id>
        <label>TMEM154</label>
    </interactant>
    <organismsDiffer>false</organismsDiffer>
    <experiments>3</experiments>
</comment>
<comment type="interaction">
    <interactant intactId="EBI-8449636">
        <id>P30301</id>
    </interactant>
    <interactant intactId="EBI-18178701">
        <id>Q4KMG9</id>
        <label>TMEM52B</label>
    </interactant>
    <organismsDiffer>false</organismsDiffer>
    <experiments>3</experiments>
</comment>
<comment type="interaction">
    <interactant intactId="EBI-8449636">
        <id>P30301</id>
    </interactant>
    <interactant intactId="EBI-6447886">
        <id>Q9Y320</id>
        <label>TMX2</label>
    </interactant>
    <organismsDiffer>false</organismsDiffer>
    <experiments>3</experiments>
</comment>
<comment type="interaction">
    <interactant intactId="EBI-8449636">
        <id>P30301</id>
    </interactant>
    <interactant intactId="EBI-718439">
        <id>O95159</id>
        <label>ZFPL1</label>
    </interactant>
    <organismsDiffer>false</organismsDiffer>
    <experiments>3</experiments>
</comment>
<comment type="subcellular location">
    <subcellularLocation>
        <location evidence="5 11 12 13 17">Cell membrane</location>
        <topology evidence="2">Multi-pass membrane protein</topology>
    </subcellularLocation>
    <subcellularLocation>
        <location evidence="2">Cell junction</location>
    </subcellularLocation>
    <text evidence="2">Localizes to thin cell-cell junctions in lens fiber cells.</text>
</comment>
<comment type="tissue specificity">
    <text evidence="12 17">Expressed in the cortex and nucleus of the retina lens (at protein level) (PubMed:30790544). Major component of lens fiber gap junctions (PubMed:24120416).</text>
</comment>
<comment type="domain">
    <text evidence="2">Aquaporins contain two tandem repeats each containing three membrane-spanning domains and a pore-forming loop with the signature motif Asn-Pro-Ala (NPA).</text>
</comment>
<comment type="PTM">
    <text evidence="2">Subject to partial proteolytic cleavage in the eye lens core. Partial proteolysis promotes interactions between tetramers from adjoining membranes.</text>
</comment>
<comment type="PTM">
    <text evidence="14">Fatty acylated at Met-1 and Lys-238. The acyl modifications, in decreasing order of ion abundance, are: oleoyl (C18:1) &gt; palmitoyl (C16:0) &gt; stearoyl (C18:0) &gt; eicosenoyl (C20:1) &gt; dihomo-gamma-linolenoyl (C20:3) &gt; palmitoleoyl (C16:1) &gt; eicosadienoyl (C20:2).</text>
</comment>
<comment type="disease" evidence="4 5 6 7 8 9 10 11 12 13 15 16">
    <disease id="DI-03782">
        <name>Cataract 15, multiple types</name>
        <acronym>CTRCT15</acronym>
        <description>An opacification of the crystalline lens of the eye that frequently results in visual impairment or blindness. Opacities vary in morphology, are often confined to a portion of the lens, and may be static or progressive. CTRCT15 includes polymorphic, progressive punctate lamellar, cortical, anterior and posterior polar, nonprogressive lamellar with sutural opacities, embryonic nuclear, and pulverulent cortical, among others.</description>
        <dbReference type="MIM" id="615274"/>
    </disease>
    <text>The disease is caused by variants affecting the gene represented in this entry.</text>
</comment>
<comment type="similarity">
    <text evidence="20">Belongs to the MIP/aquaporin (TC 1.A.8) family.</text>
</comment>